<gene>
    <name evidence="1" type="primary">tusA</name>
    <name type="ordered locus">PSPTO_2018</name>
</gene>
<reference key="1">
    <citation type="journal article" date="2003" name="Proc. Natl. Acad. Sci. U.S.A.">
        <title>The complete genome sequence of the Arabidopsis and tomato pathogen Pseudomonas syringae pv. tomato DC3000.</title>
        <authorList>
            <person name="Buell C.R."/>
            <person name="Joardar V."/>
            <person name="Lindeberg M."/>
            <person name="Selengut J."/>
            <person name="Paulsen I.T."/>
            <person name="Gwinn M.L."/>
            <person name="Dodson R.J."/>
            <person name="DeBoy R.T."/>
            <person name="Durkin A.S."/>
            <person name="Kolonay J.F."/>
            <person name="Madupu R."/>
            <person name="Daugherty S.C."/>
            <person name="Brinkac L.M."/>
            <person name="Beanan M.J."/>
            <person name="Haft D.H."/>
            <person name="Nelson W.C."/>
            <person name="Davidsen T.M."/>
            <person name="Zafar N."/>
            <person name="Zhou L."/>
            <person name="Liu J."/>
            <person name="Yuan Q."/>
            <person name="Khouri H.M."/>
            <person name="Fedorova N.B."/>
            <person name="Tran B."/>
            <person name="Russell D."/>
            <person name="Berry K.J."/>
            <person name="Utterback T.R."/>
            <person name="Van Aken S.E."/>
            <person name="Feldblyum T.V."/>
            <person name="D'Ascenzo M."/>
            <person name="Deng W.-L."/>
            <person name="Ramos A.R."/>
            <person name="Alfano J.R."/>
            <person name="Cartinhour S."/>
            <person name="Chatterjee A.K."/>
            <person name="Delaney T.P."/>
            <person name="Lazarowitz S.G."/>
            <person name="Martin G.B."/>
            <person name="Schneider D.J."/>
            <person name="Tang X."/>
            <person name="Bender C.L."/>
            <person name="White O."/>
            <person name="Fraser C.M."/>
            <person name="Collmer A."/>
        </authorList>
    </citation>
    <scope>NUCLEOTIDE SEQUENCE [LARGE SCALE GENOMIC DNA]</scope>
    <source>
        <strain>ATCC BAA-871 / DC3000</strain>
    </source>
</reference>
<sequence length="84" mass="9406">MSEPIESLTVDAVLDATGLFCPEPVMMLHQKVRDLPPSGLLKVIATDPSTCRDIPKFCVFLGHELVAEQAEESTFLYWIRKKSD</sequence>
<name>TUSA_PSESM</name>
<keyword id="KW-0963">Cytoplasm</keyword>
<keyword id="KW-1185">Reference proteome</keyword>
<comment type="function">
    <text evidence="1">Sulfur carrier protein which probably makes part of a sulfur-relay system.</text>
</comment>
<comment type="subcellular location">
    <subcellularLocation>
        <location evidence="1">Cytoplasm</location>
    </subcellularLocation>
</comment>
<comment type="similarity">
    <text evidence="1">Belongs to the sulfur carrier protein TusA family.</text>
</comment>
<proteinExistence type="inferred from homology"/>
<accession>Q884S0</accession>
<protein>
    <recommendedName>
        <fullName evidence="1">Sulfur carrier protein TusA</fullName>
    </recommendedName>
</protein>
<evidence type="ECO:0000255" key="1">
    <source>
        <dbReference type="HAMAP-Rule" id="MF_00413"/>
    </source>
</evidence>
<dbReference type="EMBL" id="AE016853">
    <property type="protein sequence ID" value="AAO55536.1"/>
    <property type="molecule type" value="Genomic_DNA"/>
</dbReference>
<dbReference type="RefSeq" id="NP_791841.1">
    <property type="nucleotide sequence ID" value="NC_004578.1"/>
</dbReference>
<dbReference type="RefSeq" id="WP_005766916.1">
    <property type="nucleotide sequence ID" value="NC_004578.1"/>
</dbReference>
<dbReference type="SMR" id="Q884S0"/>
<dbReference type="STRING" id="223283.PSPTO_2018"/>
<dbReference type="GeneID" id="1183663"/>
<dbReference type="KEGG" id="pst:PSPTO_2018"/>
<dbReference type="PATRIC" id="fig|223283.9.peg.2049"/>
<dbReference type="eggNOG" id="COG0425">
    <property type="taxonomic scope" value="Bacteria"/>
</dbReference>
<dbReference type="HOGENOM" id="CLU_165255_5_1_6"/>
<dbReference type="OrthoDB" id="9797352at2"/>
<dbReference type="PhylomeDB" id="Q884S0"/>
<dbReference type="Proteomes" id="UP000002515">
    <property type="component" value="Chromosome"/>
</dbReference>
<dbReference type="GO" id="GO:0005737">
    <property type="term" value="C:cytoplasm"/>
    <property type="evidence" value="ECO:0007669"/>
    <property type="project" value="UniProtKB-SubCell"/>
</dbReference>
<dbReference type="GO" id="GO:0097163">
    <property type="term" value="F:sulfur carrier activity"/>
    <property type="evidence" value="ECO:0007669"/>
    <property type="project" value="UniProtKB-UniRule"/>
</dbReference>
<dbReference type="GO" id="GO:0002143">
    <property type="term" value="P:tRNA wobble position uridine thiolation"/>
    <property type="evidence" value="ECO:0007669"/>
    <property type="project" value="InterPro"/>
</dbReference>
<dbReference type="CDD" id="cd03423">
    <property type="entry name" value="SirA"/>
    <property type="match status" value="1"/>
</dbReference>
<dbReference type="Gene3D" id="3.30.110.40">
    <property type="entry name" value="TusA-like domain"/>
    <property type="match status" value="1"/>
</dbReference>
<dbReference type="HAMAP" id="MF_00413">
    <property type="entry name" value="Thiourid_synth_A"/>
    <property type="match status" value="1"/>
</dbReference>
<dbReference type="InterPro" id="IPR022931">
    <property type="entry name" value="Sulphur_carrier_TusA"/>
</dbReference>
<dbReference type="InterPro" id="IPR001455">
    <property type="entry name" value="TusA-like"/>
</dbReference>
<dbReference type="InterPro" id="IPR036868">
    <property type="entry name" value="TusA-like_sf"/>
</dbReference>
<dbReference type="NCBIfam" id="NF001423">
    <property type="entry name" value="PRK00299.1"/>
    <property type="match status" value="1"/>
</dbReference>
<dbReference type="PANTHER" id="PTHR33279:SF2">
    <property type="entry name" value="SULFUR CARRIER PROTEIN TUSA"/>
    <property type="match status" value="1"/>
</dbReference>
<dbReference type="PANTHER" id="PTHR33279">
    <property type="entry name" value="SULFUR CARRIER PROTEIN YEDF-RELATED"/>
    <property type="match status" value="1"/>
</dbReference>
<dbReference type="Pfam" id="PF01206">
    <property type="entry name" value="TusA"/>
    <property type="match status" value="1"/>
</dbReference>
<dbReference type="SUPFAM" id="SSF64307">
    <property type="entry name" value="SirA-like"/>
    <property type="match status" value="1"/>
</dbReference>
<organism>
    <name type="scientific">Pseudomonas syringae pv. tomato (strain ATCC BAA-871 / DC3000)</name>
    <dbReference type="NCBI Taxonomy" id="223283"/>
    <lineage>
        <taxon>Bacteria</taxon>
        <taxon>Pseudomonadati</taxon>
        <taxon>Pseudomonadota</taxon>
        <taxon>Gammaproteobacteria</taxon>
        <taxon>Pseudomonadales</taxon>
        <taxon>Pseudomonadaceae</taxon>
        <taxon>Pseudomonas</taxon>
    </lineage>
</organism>
<feature type="chain" id="PRO_0000159048" description="Sulfur carrier protein TusA">
    <location>
        <begin position="1"/>
        <end position="84"/>
    </location>
</feature>
<feature type="active site" description="Cysteine persulfide intermediate" evidence="1">
    <location>
        <position position="21"/>
    </location>
</feature>